<comment type="function">
    <text evidence="2 4 5 6 7 8 9 10 11">Sulfotransferase involved in SELL/L-selectin ligand biosynthesis pathway. Catalyzes the transfer of the sulfate group from 3'-phospho-5'-adenylyl sulfate (PAPS) onto the hydroxyl group at C-6 position of the non-reducing N-acetylglucosamine (GlcNAc) residue within O-linked mucin-type glycans (PubMed:10435581, PubMed:14597732, PubMed:15111310, PubMed:15319280, PubMed:16227985, PubMed:16227986). Contributes to generate sialyl 6-sulfo Lewis X determinant (also known as MECA-79 epitope) for SELL recognition, a prerequisite for continuous lymphocyte homing into peripheral lymph nodes and antigen immune surveillance. Transfers the sulfate group primarily on core 2 GlcNAcbeta1-6(Galbeta1-3)GalNAcalphaSer/Thr and extended core 1 GlcNAcbeta1-3Galbeta1-3GalNAcalphaSer/Thr based O-linked glycans on CD34 and GLYCAM1 peripheral node addressins (PNAds) expressed on the lumenal side of high endothelial venules (HEVs) (PubMed:10435581, PubMed:14593101, PubMed:15111310, PubMed:15319280, PubMed:16227985, PubMed:16227986). The recognition of PNAds by SELL initiates a multistep process comprising tethering and rolling of blood lymphocytes on HEVs against the blood flow, followed by chemokine signaling, integrin-mediated lymphocyte adhesion onto endothelial cells and lymphocyte transendothelial migration. Modulates rolling velocity and differential T and B lymphocyte recruitment into peripheral lymph nodes, with a major role in B lymphocyte homing (PubMed:10435581, PubMed:14597732, PubMed:15319280, PubMed:16227985, PubMed:16227986). Might be redundant in sulfation of MADCAM1 and lymphocyte trafficking to mesenteric lymph nodes (PubMed:10435581, PubMed:11520459, PubMed:16227986). Can also sulfonate core 3 GlcNAcbeta1-3GalNAc-R based glycans as well as GlcNAcbeta1-3Galbeta1-Glc, GlcNAcbeta1-6ManOMe and GlcNAcbeta1-2Man oligosaccharides, which might be ectopically expressed during tumorigenesis (By similarity).</text>
</comment>
<comment type="catalytic activity">
    <reaction evidence="10">
        <text>3-O-{N-acetyl-beta-D-glucosaminyl-(1-&gt;3)-beta-D-galactosyl-(1-&gt;3)-N-acetyl-alpha-D-galactosaminyl}-L-threonyl-[protein] + 3'-phosphoadenylyl sulfate = 3-O-{6-O-sulfo-N-acetyl-beta-D-glucosaminyl-(1-&gt;3)-beta-D-galactosyl-(1-&gt;3)-N-acetyl-alpha-D-galactosaminyl}-L-threonyl-[protein] + adenosine 3',5'-bisphosphate + H(+)</text>
        <dbReference type="Rhea" id="RHEA:67856"/>
        <dbReference type="Rhea" id="RHEA-COMP:17368"/>
        <dbReference type="Rhea" id="RHEA-COMP:17369"/>
        <dbReference type="ChEBI" id="CHEBI:15378"/>
        <dbReference type="ChEBI" id="CHEBI:58339"/>
        <dbReference type="ChEBI" id="CHEBI:58343"/>
        <dbReference type="ChEBI" id="CHEBI:176489"/>
        <dbReference type="ChEBI" id="CHEBI:176492"/>
    </reaction>
    <physiologicalReaction direction="left-to-right" evidence="14">
        <dbReference type="Rhea" id="RHEA:67857"/>
    </physiologicalReaction>
</comment>
<comment type="catalytic activity">
    <reaction evidence="10">
        <text>3-O-{N-acetyl-beta-D-glucosaminyl-(1-&gt;3)-beta-D-galactosyl-(1-&gt;3)-N-acetyl-alpha-D-galactosaminyl}-L-seryl-[protein] + 3'-phosphoadenylyl sulfate = 3-O-{6-O-sulfo-N-acetyl-beta-D-glucosaminyl-(1-&gt;3)-beta-D-galactosyl-(1-&gt;3)-N-acetyl-alpha-D-galactosaminyl}-L-seryl-[protein] + adenosine 3',5'-bisphosphate + H(+)</text>
        <dbReference type="Rhea" id="RHEA:67860"/>
        <dbReference type="Rhea" id="RHEA-COMP:17365"/>
        <dbReference type="Rhea" id="RHEA-COMP:17366"/>
        <dbReference type="ChEBI" id="CHEBI:15378"/>
        <dbReference type="ChEBI" id="CHEBI:58339"/>
        <dbReference type="ChEBI" id="CHEBI:58343"/>
        <dbReference type="ChEBI" id="CHEBI:176490"/>
        <dbReference type="ChEBI" id="CHEBI:176491"/>
    </reaction>
    <physiologicalReaction direction="left-to-right" evidence="14">
        <dbReference type="Rhea" id="RHEA:67861"/>
    </physiologicalReaction>
</comment>
<comment type="catalytic activity">
    <reaction evidence="4 10">
        <text>a 3-O-{beta-D-galactosyl-(1-&gt;3)-[N-acetyl-beta-D-glucosaminyl-(1-&gt;6)]-N-acetyl-alpha-D-galactosaminyl}-L-threonyl-[protein] + 3'-phosphoadenylyl sulfate = 3-O-{beta-D-galactosyl-(1-&gt;3)-[6-O-sulfo-N-acetyl-beta-D-glucosaminyl-(1-&gt;6)]-N-acetyl-alpha-D-galactosaminyl}-L-threonyl-[protein] + adenosine 3',5'-bisphosphate + H(+)</text>
        <dbReference type="Rhea" id="RHEA:67864"/>
        <dbReference type="Rhea" id="RHEA-COMP:14420"/>
        <dbReference type="Rhea" id="RHEA-COMP:17370"/>
        <dbReference type="ChEBI" id="CHEBI:15378"/>
        <dbReference type="ChEBI" id="CHEBI:58339"/>
        <dbReference type="ChEBI" id="CHEBI:58343"/>
        <dbReference type="ChEBI" id="CHEBI:139607"/>
        <dbReference type="ChEBI" id="CHEBI:176493"/>
    </reaction>
    <physiologicalReaction direction="left-to-right" evidence="13 14">
        <dbReference type="Rhea" id="RHEA:67865"/>
    </physiologicalReaction>
</comment>
<comment type="catalytic activity">
    <reaction evidence="4 10">
        <text>3-O-{beta-D-galactosyl-(1-&gt;3)-[N-acetyl-beta-D-glucosaminyl-(1-&gt;6)]-N-acetyl-alpha-D-galactosaminyl}-L-seryl-[protein] + 3'-phosphoadenylyl sulfate = 3-O-{beta-D-galactosyl-(1-&gt;3)-[6-O-sulfo-N-acetyl-beta-D-glucosaminyl-(1-&gt;6)]-N-acetyl-alpha-D-galactosaminyl}-L-seryl-[protein] + adenosine 3',5'-bisphosphate + H(+)</text>
        <dbReference type="Rhea" id="RHEA:67868"/>
        <dbReference type="Rhea" id="RHEA-COMP:14419"/>
        <dbReference type="Rhea" id="RHEA-COMP:17367"/>
        <dbReference type="ChEBI" id="CHEBI:15378"/>
        <dbReference type="ChEBI" id="CHEBI:58339"/>
        <dbReference type="ChEBI" id="CHEBI:58343"/>
        <dbReference type="ChEBI" id="CHEBI:139605"/>
        <dbReference type="ChEBI" id="CHEBI:176494"/>
    </reaction>
    <physiologicalReaction direction="left-to-right" evidence="13 14">
        <dbReference type="Rhea" id="RHEA:67869"/>
    </physiologicalReaction>
</comment>
<comment type="pathway">
    <text evidence="4 10">Protein modification; carbohydrate sulfation.</text>
</comment>
<comment type="subunit">
    <text evidence="2">Monomer.</text>
</comment>
<comment type="subcellular location">
    <subcellularLocation>
        <location evidence="8">Golgi apparatus membrane</location>
        <topology evidence="8">Single-pass type II membrane protein</topology>
    </subcellularLocation>
</comment>
<comment type="tissue specificity">
    <text evidence="4 10 11">Specifically expressed in high endothelial venules (HEV) of peripheral lymph nodes.</text>
</comment>
<comment type="disruption phenotype">
    <text evidence="5 6 7 8 10">Mice are impaired in lymphocyte homing and exhibit faster lymphocyte rolling and reduced lymphocyte sticking in HEV. The epitope of SELL ligands recognized by the MECA-79 antibody is greatly reduced or abolished in the abluminal aspect of HEV. Simultaneous knockdown of CHST4 and CHST2 results in lower contact hypersensitivity response when compared to wild-type littermates.</text>
</comment>
<comment type="similarity">
    <text evidence="12">Belongs to the sulfotransferase 1 family. Gal/GlcNAc/GalNAc subfamily.</text>
</comment>
<reference key="1">
    <citation type="journal article" date="1999" name="Immunity">
        <title>A novel, high endothelial venule-specific sulfotransferase expresses 6-sulfo sialyl Lewis(x), an L-selectin ligand displayed by CD34.</title>
        <authorList>
            <person name="Hiraoka N."/>
            <person name="Petryniak B."/>
            <person name="Nakayama J."/>
            <person name="Tsuboi S."/>
            <person name="Suzuki M."/>
            <person name="Yeh J.-C."/>
            <person name="Izawa D."/>
            <person name="Tanaka T."/>
            <person name="Miyasaka M."/>
            <person name="Lowe J.B."/>
            <person name="Fukuda M."/>
        </authorList>
    </citation>
    <scope>NUCLEOTIDE SEQUENCE [MRNA]</scope>
    <scope>FUNCTION</scope>
    <scope>CATALYTIC ACTIVITY</scope>
    <scope>PATHWAY</scope>
    <scope>TISSUE SPECIFICITY</scope>
</reference>
<reference key="2">
    <citation type="journal article" date="1999" name="J. Cell Biol.">
        <title>Sulfotransferases of two specificities function in the reconstitution of high endothelial cell ligands for L-selectin.</title>
        <authorList>
            <person name="Bistrup A."/>
            <person name="Bhakta S."/>
            <person name="Lee J.K."/>
            <person name="Belov Y.Y."/>
            <person name="Gunn M.D."/>
            <person name="Zuo F.-R."/>
            <person name="Huang C.-C."/>
            <person name="Kannagi R."/>
            <person name="Rosen S.D."/>
            <person name="Hemmerich S."/>
        </authorList>
    </citation>
    <scope>NUCLEOTIDE SEQUENCE [GENOMIC DNA]</scope>
    <source>
        <strain>C57BL/6J</strain>
        <tissue>Tonsil</tissue>
    </source>
</reference>
<reference key="3">
    <citation type="journal article" date="2005" name="Science">
        <title>The transcriptional landscape of the mammalian genome.</title>
        <authorList>
            <person name="Carninci P."/>
            <person name="Kasukawa T."/>
            <person name="Katayama S."/>
            <person name="Gough J."/>
            <person name="Frith M.C."/>
            <person name="Maeda N."/>
            <person name="Oyama R."/>
            <person name="Ravasi T."/>
            <person name="Lenhard B."/>
            <person name="Wells C."/>
            <person name="Kodzius R."/>
            <person name="Shimokawa K."/>
            <person name="Bajic V.B."/>
            <person name="Brenner S.E."/>
            <person name="Batalov S."/>
            <person name="Forrest A.R."/>
            <person name="Zavolan M."/>
            <person name="Davis M.J."/>
            <person name="Wilming L.G."/>
            <person name="Aidinis V."/>
            <person name="Allen J.E."/>
            <person name="Ambesi-Impiombato A."/>
            <person name="Apweiler R."/>
            <person name="Aturaliya R.N."/>
            <person name="Bailey T.L."/>
            <person name="Bansal M."/>
            <person name="Baxter L."/>
            <person name="Beisel K.W."/>
            <person name="Bersano T."/>
            <person name="Bono H."/>
            <person name="Chalk A.M."/>
            <person name="Chiu K.P."/>
            <person name="Choudhary V."/>
            <person name="Christoffels A."/>
            <person name="Clutterbuck D.R."/>
            <person name="Crowe M.L."/>
            <person name="Dalla E."/>
            <person name="Dalrymple B.P."/>
            <person name="de Bono B."/>
            <person name="Della Gatta G."/>
            <person name="di Bernardo D."/>
            <person name="Down T."/>
            <person name="Engstrom P."/>
            <person name="Fagiolini M."/>
            <person name="Faulkner G."/>
            <person name="Fletcher C.F."/>
            <person name="Fukushima T."/>
            <person name="Furuno M."/>
            <person name="Futaki S."/>
            <person name="Gariboldi M."/>
            <person name="Georgii-Hemming P."/>
            <person name="Gingeras T.R."/>
            <person name="Gojobori T."/>
            <person name="Green R.E."/>
            <person name="Gustincich S."/>
            <person name="Harbers M."/>
            <person name="Hayashi Y."/>
            <person name="Hensch T.K."/>
            <person name="Hirokawa N."/>
            <person name="Hill D."/>
            <person name="Huminiecki L."/>
            <person name="Iacono M."/>
            <person name="Ikeo K."/>
            <person name="Iwama A."/>
            <person name="Ishikawa T."/>
            <person name="Jakt M."/>
            <person name="Kanapin A."/>
            <person name="Katoh M."/>
            <person name="Kawasawa Y."/>
            <person name="Kelso J."/>
            <person name="Kitamura H."/>
            <person name="Kitano H."/>
            <person name="Kollias G."/>
            <person name="Krishnan S.P."/>
            <person name="Kruger A."/>
            <person name="Kummerfeld S.K."/>
            <person name="Kurochkin I.V."/>
            <person name="Lareau L.F."/>
            <person name="Lazarevic D."/>
            <person name="Lipovich L."/>
            <person name="Liu J."/>
            <person name="Liuni S."/>
            <person name="McWilliam S."/>
            <person name="Madan Babu M."/>
            <person name="Madera M."/>
            <person name="Marchionni L."/>
            <person name="Matsuda H."/>
            <person name="Matsuzawa S."/>
            <person name="Miki H."/>
            <person name="Mignone F."/>
            <person name="Miyake S."/>
            <person name="Morris K."/>
            <person name="Mottagui-Tabar S."/>
            <person name="Mulder N."/>
            <person name="Nakano N."/>
            <person name="Nakauchi H."/>
            <person name="Ng P."/>
            <person name="Nilsson R."/>
            <person name="Nishiguchi S."/>
            <person name="Nishikawa S."/>
            <person name="Nori F."/>
            <person name="Ohara O."/>
            <person name="Okazaki Y."/>
            <person name="Orlando V."/>
            <person name="Pang K.C."/>
            <person name="Pavan W.J."/>
            <person name="Pavesi G."/>
            <person name="Pesole G."/>
            <person name="Petrovsky N."/>
            <person name="Piazza S."/>
            <person name="Reed J."/>
            <person name="Reid J.F."/>
            <person name="Ring B.Z."/>
            <person name="Ringwald M."/>
            <person name="Rost B."/>
            <person name="Ruan Y."/>
            <person name="Salzberg S.L."/>
            <person name="Sandelin A."/>
            <person name="Schneider C."/>
            <person name="Schoenbach C."/>
            <person name="Sekiguchi K."/>
            <person name="Semple C.A."/>
            <person name="Seno S."/>
            <person name="Sessa L."/>
            <person name="Sheng Y."/>
            <person name="Shibata Y."/>
            <person name="Shimada H."/>
            <person name="Shimada K."/>
            <person name="Silva D."/>
            <person name="Sinclair B."/>
            <person name="Sperling S."/>
            <person name="Stupka E."/>
            <person name="Sugiura K."/>
            <person name="Sultana R."/>
            <person name="Takenaka Y."/>
            <person name="Taki K."/>
            <person name="Tammoja K."/>
            <person name="Tan S.L."/>
            <person name="Tang S."/>
            <person name="Taylor M.S."/>
            <person name="Tegner J."/>
            <person name="Teichmann S.A."/>
            <person name="Ueda H.R."/>
            <person name="van Nimwegen E."/>
            <person name="Verardo R."/>
            <person name="Wei C.L."/>
            <person name="Yagi K."/>
            <person name="Yamanishi H."/>
            <person name="Zabarovsky E."/>
            <person name="Zhu S."/>
            <person name="Zimmer A."/>
            <person name="Hide W."/>
            <person name="Bult C."/>
            <person name="Grimmond S.M."/>
            <person name="Teasdale R.D."/>
            <person name="Liu E.T."/>
            <person name="Brusic V."/>
            <person name="Quackenbush J."/>
            <person name="Wahlestedt C."/>
            <person name="Mattick J.S."/>
            <person name="Hume D.A."/>
            <person name="Kai C."/>
            <person name="Sasaki D."/>
            <person name="Tomaru Y."/>
            <person name="Fukuda S."/>
            <person name="Kanamori-Katayama M."/>
            <person name="Suzuki M."/>
            <person name="Aoki J."/>
            <person name="Arakawa T."/>
            <person name="Iida J."/>
            <person name="Imamura K."/>
            <person name="Itoh M."/>
            <person name="Kato T."/>
            <person name="Kawaji H."/>
            <person name="Kawagashira N."/>
            <person name="Kawashima T."/>
            <person name="Kojima M."/>
            <person name="Kondo S."/>
            <person name="Konno H."/>
            <person name="Nakano K."/>
            <person name="Ninomiya N."/>
            <person name="Nishio T."/>
            <person name="Okada M."/>
            <person name="Plessy C."/>
            <person name="Shibata K."/>
            <person name="Shiraki T."/>
            <person name="Suzuki S."/>
            <person name="Tagami M."/>
            <person name="Waki K."/>
            <person name="Watahiki A."/>
            <person name="Okamura-Oho Y."/>
            <person name="Suzuki H."/>
            <person name="Kawai J."/>
            <person name="Hayashizaki Y."/>
        </authorList>
    </citation>
    <scope>NUCLEOTIDE SEQUENCE [LARGE SCALE MRNA]</scope>
    <source>
        <strain>C57BL/6J</strain>
        <tissue>Tongue</tissue>
    </source>
</reference>
<reference key="4">
    <citation type="journal article" date="2004" name="Genome Res.">
        <title>The status, quality, and expansion of the NIH full-length cDNA project: the Mammalian Gene Collection (MGC).</title>
        <authorList>
            <consortium name="The MGC Project Team"/>
        </authorList>
    </citation>
    <scope>NUCLEOTIDE SEQUENCE [LARGE SCALE MRNA]</scope>
    <source>
        <strain>FVB/N</strain>
        <tissue>Colon</tissue>
    </source>
</reference>
<reference key="5">
    <citation type="journal article" date="2001" name="Immunity">
        <title>Sulfation of L-selectin ligands by an HEV-restricted sulfotransferase regulates lymphocyte homing to lymph nodes.</title>
        <authorList>
            <person name="Hemmerich S."/>
            <person name="Bistrup A."/>
            <person name="Singer M.S."/>
            <person name="van Zante A."/>
            <person name="Lee J.K."/>
            <person name="Tsay D."/>
            <person name="Peters M."/>
            <person name="Carminati J.L."/>
            <person name="Brennan T.J."/>
            <person name="Carver-Moore K."/>
            <person name="Leviten M."/>
            <person name="Fuentes M.E."/>
            <person name="Ruddle N.H."/>
            <person name="Rosen S.D."/>
        </authorList>
    </citation>
    <scope>FUNCTION</scope>
    <scope>DISRUPTION PHENOTYPE</scope>
</reference>
<reference key="6">
    <citation type="journal article" date="2003" name="J. Exp. Med.">
        <title>Lymphocyte-HEV interactions in lymph nodes of a sulfotransferase-deficient mouse.</title>
        <authorList>
            <person name="van Zante A."/>
            <person name="Gauguet J.-M."/>
            <person name="Bistrup A."/>
            <person name="Tsay D."/>
            <person name="von Andrian U.H."/>
            <person name="Rosen S.D."/>
        </authorList>
    </citation>
    <scope>FUNCTION</scope>
    <scope>DISRUPTION PHENOTYPE</scope>
</reference>
<reference key="7">
    <citation type="journal article" date="2004" name="Am. J. Pathol.">
        <title>Detection of a sulfotransferase (HEC-GlcNAc6ST) in high endothelial venules of lymph nodes and in high endothelial venule-like vessels within ectopic lymphoid aggregates: relationship to the MECA-79 epitope.</title>
        <authorList>
            <person name="Bistrup A."/>
            <person name="Tsay D."/>
            <person name="Shenoy P."/>
            <person name="Singer M.S."/>
            <person name="Bangia N."/>
            <person name="Luther S.A."/>
            <person name="Cyster J.G."/>
            <person name="Ruddle N.H."/>
            <person name="Rosen S.D."/>
        </authorList>
    </citation>
    <scope>FUNCTION</scope>
    <scope>DISRUPTION PHENOTYPE</scope>
    <scope>SUBCELLULAR LOCATION</scope>
</reference>
<reference key="8">
    <citation type="journal article" date="2004" name="Blood">
        <title>Core 2 branching beta1,6-N-acetylglucosaminyltransferase and high endothelial cell N-acetylglucosamine-6-sulfotransferase exert differential control over B- and T-lymphocyte homing to peripheral lymph nodes.</title>
        <authorList>
            <person name="Gauguet J.M."/>
            <person name="Rosen S.D."/>
            <person name="Marth J.D."/>
            <person name="von Andrian U.H."/>
        </authorList>
    </citation>
    <scope>FUNCTION</scope>
</reference>
<reference key="9">
    <citation type="journal article" date="2004" name="J. Biol. Chem.">
        <title>Core 2 branching beta1,6-N-acetylglucosaminyltransferase and high endothelial venule-restricted sulfotransferase collaboratively control lymphocyte homing.</title>
        <authorList>
            <person name="Hiraoka N."/>
            <person name="Kawashima H."/>
            <person name="Petryniak B."/>
            <person name="Nakayama J."/>
            <person name="Mitoma J."/>
            <person name="Marth J.D."/>
            <person name="Lowe J.B."/>
            <person name="Fukuda M."/>
        </authorList>
    </citation>
    <scope>FUNCTION</scope>
    <scope>DISRUPTION PHENOTYPE</scope>
</reference>
<reference key="10">
    <citation type="journal article" date="2005" name="Nat. Immunol.">
        <title>N-acetylglucosamine-6-O-sulfotransferases 1 and 2 cooperatively control lymphocyte homing through L-selectin ligand biosynthesis in high endothelial venules.</title>
        <authorList>
            <person name="Kawashima H."/>
            <person name="Petryniak B."/>
            <person name="Hiraoka N."/>
            <person name="Mitoma J."/>
            <person name="Huckaby V."/>
            <person name="Nakayama J."/>
            <person name="Uchimura K."/>
            <person name="Kadomatsu K."/>
            <person name="Muramatsu T."/>
            <person name="Lowe J.B."/>
            <person name="Fukuda M."/>
        </authorList>
    </citation>
    <scope>FUNCTION</scope>
    <scope>CATALYTIC ACTIVITY</scope>
    <scope>PATHWAY</scope>
    <scope>DISRUPTION PHENOTYPE</scope>
    <scope>TISSUE SPECIFICITY</scope>
</reference>
<reference key="11">
    <citation type="journal article" date="2005" name="Nat. Immunol.">
        <title>A major class of L-selectin ligands is eliminated in mice deficient in two sulfotransferases expressed in high endothelial venules.</title>
        <authorList>
            <person name="Uchimura K."/>
            <person name="Gauguet J.M."/>
            <person name="Singer M.S."/>
            <person name="Tsay D."/>
            <person name="Kannagi R."/>
            <person name="Muramatsu T."/>
            <person name="von Andrian U.H."/>
            <person name="Rosen S.D."/>
        </authorList>
    </citation>
    <scope>FUNCTION</scope>
    <scope>TISSUE SPECIFICITY</scope>
</reference>
<evidence type="ECO:0000250" key="1"/>
<evidence type="ECO:0000250" key="2">
    <source>
        <dbReference type="UniProtKB" id="Q8NCG5"/>
    </source>
</evidence>
<evidence type="ECO:0000255" key="3"/>
<evidence type="ECO:0000269" key="4">
    <source>
    </source>
</evidence>
<evidence type="ECO:0000269" key="5">
    <source>
    </source>
</evidence>
<evidence type="ECO:0000269" key="6">
    <source>
    </source>
</evidence>
<evidence type="ECO:0000269" key="7">
    <source>
    </source>
</evidence>
<evidence type="ECO:0000269" key="8">
    <source>
    </source>
</evidence>
<evidence type="ECO:0000269" key="9">
    <source>
    </source>
</evidence>
<evidence type="ECO:0000269" key="10">
    <source>
    </source>
</evidence>
<evidence type="ECO:0000269" key="11">
    <source>
    </source>
</evidence>
<evidence type="ECO:0000305" key="12"/>
<evidence type="ECO:0000305" key="13">
    <source>
    </source>
</evidence>
<evidence type="ECO:0000305" key="14">
    <source>
    </source>
</evidence>
<organism>
    <name type="scientific">Mus musculus</name>
    <name type="common">Mouse</name>
    <dbReference type="NCBI Taxonomy" id="10090"/>
    <lineage>
        <taxon>Eukaryota</taxon>
        <taxon>Metazoa</taxon>
        <taxon>Chordata</taxon>
        <taxon>Craniata</taxon>
        <taxon>Vertebrata</taxon>
        <taxon>Euteleostomi</taxon>
        <taxon>Mammalia</taxon>
        <taxon>Eutheria</taxon>
        <taxon>Euarchontoglires</taxon>
        <taxon>Glires</taxon>
        <taxon>Rodentia</taxon>
        <taxon>Myomorpha</taxon>
        <taxon>Muroidea</taxon>
        <taxon>Muridae</taxon>
        <taxon>Murinae</taxon>
        <taxon>Mus</taxon>
        <taxon>Mus</taxon>
    </lineage>
</organism>
<gene>
    <name type="primary">Chst4</name>
    <name type="synonym">Gst3</name>
</gene>
<keyword id="KW-0119">Carbohydrate metabolism</keyword>
<keyword id="KW-0325">Glycoprotein</keyword>
<keyword id="KW-0333">Golgi apparatus</keyword>
<keyword id="KW-0395">Inflammatory response</keyword>
<keyword id="KW-0472">Membrane</keyword>
<keyword id="KW-1185">Reference proteome</keyword>
<keyword id="KW-0735">Signal-anchor</keyword>
<keyword id="KW-0808">Transferase</keyword>
<keyword id="KW-0812">Transmembrane</keyword>
<keyword id="KW-1133">Transmembrane helix</keyword>
<accession>Q9R1I1</accession>
<accession>Q9WUE5</accession>
<name>CHST4_MOUSE</name>
<feature type="chain" id="PRO_0000085194" description="Carbohydrate sulfotransferase 4">
    <location>
        <begin position="1"/>
        <end position="388"/>
    </location>
</feature>
<feature type="topological domain" description="Cytoplasmic" evidence="3">
    <location>
        <begin position="1"/>
        <end position="7"/>
    </location>
</feature>
<feature type="transmembrane region" description="Helical; Signal-anchor for type II membrane protein" evidence="3">
    <location>
        <begin position="8"/>
        <end position="28"/>
    </location>
</feature>
<feature type="topological domain" description="Lumenal" evidence="3">
    <location>
        <begin position="29"/>
        <end position="388"/>
    </location>
</feature>
<feature type="binding site" evidence="1">
    <location>
        <begin position="50"/>
        <end position="56"/>
    </location>
    <ligand>
        <name>3'-phosphoadenylyl sulfate</name>
        <dbReference type="ChEBI" id="CHEBI:58339"/>
    </ligand>
</feature>
<feature type="binding site" evidence="1">
    <location>
        <begin position="204"/>
        <end position="212"/>
    </location>
    <ligand>
        <name>3'-phosphoadenylyl sulfate</name>
        <dbReference type="ChEBI" id="CHEBI:58339"/>
    </ligand>
</feature>
<feature type="glycosylation site" description="N-linked (GlcNAc...) asparagine" evidence="3">
    <location>
        <position position="307"/>
    </location>
</feature>
<feature type="glycosylation site" description="N-linked (GlcNAc...) asparagine" evidence="3">
    <location>
        <position position="328"/>
    </location>
</feature>
<feature type="glycosylation site" description="N-linked (GlcNAc...) asparagine" evidence="3">
    <location>
        <position position="369"/>
    </location>
</feature>
<feature type="sequence conflict" description="In Ref. 2 and 3." evidence="12" ref="2 3">
    <original>V</original>
    <variation>M</variation>
    <location>
        <position position="221"/>
    </location>
</feature>
<feature type="sequence conflict" description="In Ref. 2 and 3." evidence="12" ref="2 3">
    <original>H</original>
    <variation>Y</variation>
    <location>
        <position position="306"/>
    </location>
</feature>
<protein>
    <recommendedName>
        <fullName>Carbohydrate sulfotransferase 4</fullName>
        <ecNumber evidence="4 10">2.8.2.-</ecNumber>
    </recommendedName>
    <alternativeName>
        <fullName>Galactose/N-acetylglucosamine/N-acetylglucosamine 6-O-sulfotransferase 3</fullName>
        <shortName>GST-3</shortName>
    </alternativeName>
    <alternativeName>
        <fullName>High endothelial cells N-acetylglucosamine 6-O-sulfotransferase</fullName>
        <shortName>HEC-GlcNAc6ST</shortName>
    </alternativeName>
    <alternativeName>
        <fullName>L-selectin ligand sulfotransferase</fullName>
        <shortName>LSST</shortName>
    </alternativeName>
    <alternativeName>
        <fullName>N-acetylglucosamine 6-O-sulfotransferase 2</fullName>
        <shortName>GlcNAc6ST-2</shortName>
        <shortName>Gn6st-2</shortName>
    </alternativeName>
</protein>
<proteinExistence type="evidence at protein level"/>
<dbReference type="EC" id="2.8.2.-" evidence="4 10"/>
<dbReference type="EMBL" id="AF109155">
    <property type="protein sequence ID" value="AAD45579.1"/>
    <property type="molecule type" value="mRNA"/>
</dbReference>
<dbReference type="EMBL" id="AF131236">
    <property type="protein sequence ID" value="AAD33016.1"/>
    <property type="molecule type" value="Genomic_DNA"/>
</dbReference>
<dbReference type="EMBL" id="AK009113">
    <property type="protein sequence ID" value="BAB26078.1"/>
    <property type="molecule type" value="mRNA"/>
</dbReference>
<dbReference type="EMBL" id="BC057886">
    <property type="protein sequence ID" value="AAH57886.1"/>
    <property type="molecule type" value="mRNA"/>
</dbReference>
<dbReference type="CCDS" id="CCDS22659.1"/>
<dbReference type="RefSeq" id="NP_036128.3">
    <property type="nucleotide sequence ID" value="NM_011998.4"/>
</dbReference>
<dbReference type="RefSeq" id="XP_006531106.1">
    <property type="nucleotide sequence ID" value="XM_006531043.3"/>
</dbReference>
<dbReference type="RefSeq" id="XP_006531107.1">
    <property type="nucleotide sequence ID" value="XM_006531044.2"/>
</dbReference>
<dbReference type="RefSeq" id="XP_006531108.1">
    <property type="nucleotide sequence ID" value="XM_006531045.3"/>
</dbReference>
<dbReference type="FunCoup" id="Q9R1I1">
    <property type="interactions" value="76"/>
</dbReference>
<dbReference type="STRING" id="10090.ENSMUSP00000104845"/>
<dbReference type="GlyCosmos" id="Q9R1I1">
    <property type="glycosylation" value="3 sites, No reported glycans"/>
</dbReference>
<dbReference type="GlyGen" id="Q9R1I1">
    <property type="glycosylation" value="4 sites"/>
</dbReference>
<dbReference type="PhosphoSitePlus" id="Q9R1I1"/>
<dbReference type="PaxDb" id="10090-ENSMUSP00000104845"/>
<dbReference type="ProteomicsDB" id="283838"/>
<dbReference type="DNASU" id="26887"/>
<dbReference type="GeneID" id="26887"/>
<dbReference type="KEGG" id="mmu:26887"/>
<dbReference type="UCSC" id="uc009njt.2">
    <property type="organism name" value="mouse"/>
</dbReference>
<dbReference type="AGR" id="MGI:1349479"/>
<dbReference type="CTD" id="10164"/>
<dbReference type="MGI" id="MGI:1349479">
    <property type="gene designation" value="Chst4"/>
</dbReference>
<dbReference type="eggNOG" id="ENOG502RGC5">
    <property type="taxonomic scope" value="Eukaryota"/>
</dbReference>
<dbReference type="InParanoid" id="Q9R1I1"/>
<dbReference type="OrthoDB" id="21217at9989"/>
<dbReference type="PhylomeDB" id="Q9R1I1"/>
<dbReference type="TreeFam" id="TF342871"/>
<dbReference type="Reactome" id="R-MMU-913709">
    <property type="pathway name" value="O-linked glycosylation of mucins"/>
</dbReference>
<dbReference type="UniPathway" id="UPA00353"/>
<dbReference type="BioGRID-ORCS" id="26887">
    <property type="hits" value="0 hits in 76 CRISPR screens"/>
</dbReference>
<dbReference type="ChiTaRS" id="Chst4">
    <property type="organism name" value="mouse"/>
</dbReference>
<dbReference type="PRO" id="PR:Q9R1I1"/>
<dbReference type="Proteomes" id="UP000000589">
    <property type="component" value="Unplaced"/>
</dbReference>
<dbReference type="RNAct" id="Q9R1I1">
    <property type="molecule type" value="protein"/>
</dbReference>
<dbReference type="GO" id="GO:0000139">
    <property type="term" value="C:Golgi membrane"/>
    <property type="evidence" value="ECO:0007669"/>
    <property type="project" value="UniProtKB-SubCell"/>
</dbReference>
<dbReference type="GO" id="GO:0001517">
    <property type="term" value="F:N-acetylglucosamine 6-O-sulfotransferase activity"/>
    <property type="evidence" value="ECO:0000314"/>
    <property type="project" value="UniProtKB"/>
</dbReference>
<dbReference type="GO" id="GO:0005975">
    <property type="term" value="P:carbohydrate metabolic process"/>
    <property type="evidence" value="ECO:0007669"/>
    <property type="project" value="InterPro"/>
</dbReference>
<dbReference type="GO" id="GO:0006954">
    <property type="term" value="P:inflammatory response"/>
    <property type="evidence" value="ECO:0007669"/>
    <property type="project" value="UniProtKB-KW"/>
</dbReference>
<dbReference type="GO" id="GO:0050901">
    <property type="term" value="P:leukocyte tethering or rolling"/>
    <property type="evidence" value="ECO:0000315"/>
    <property type="project" value="MGI"/>
</dbReference>
<dbReference type="GO" id="GO:1903238">
    <property type="term" value="P:positive regulation of leukocyte tethering or rolling"/>
    <property type="evidence" value="ECO:0000315"/>
    <property type="project" value="UniProtKB"/>
</dbReference>
<dbReference type="FunFam" id="3.40.50.300:FF:000703">
    <property type="entry name" value="Sulfotransferase"/>
    <property type="match status" value="1"/>
</dbReference>
<dbReference type="Gene3D" id="3.40.50.300">
    <property type="entry name" value="P-loop containing nucleotide triphosphate hydrolases"/>
    <property type="match status" value="1"/>
</dbReference>
<dbReference type="InterPro" id="IPR016469">
    <property type="entry name" value="Carbohydrate_sulfotransferase"/>
</dbReference>
<dbReference type="InterPro" id="IPR051135">
    <property type="entry name" value="Gal/GlcNAc/GalNAc_ST"/>
</dbReference>
<dbReference type="InterPro" id="IPR027417">
    <property type="entry name" value="P-loop_NTPase"/>
</dbReference>
<dbReference type="InterPro" id="IPR000863">
    <property type="entry name" value="Sulfotransferase_dom"/>
</dbReference>
<dbReference type="PANTHER" id="PTHR10704">
    <property type="entry name" value="CARBOHYDRATE SULFOTRANSFERASE"/>
    <property type="match status" value="1"/>
</dbReference>
<dbReference type="PANTHER" id="PTHR10704:SF40">
    <property type="entry name" value="CARBOHYDRATE SULFOTRANSFERASE 4"/>
    <property type="match status" value="1"/>
</dbReference>
<dbReference type="Pfam" id="PF00685">
    <property type="entry name" value="Sulfotransfer_1"/>
    <property type="match status" value="1"/>
</dbReference>
<dbReference type="PIRSF" id="PIRSF005883">
    <property type="entry name" value="Carbohydrate_sulfotransferase"/>
    <property type="match status" value="1"/>
</dbReference>
<dbReference type="SUPFAM" id="SSF52540">
    <property type="entry name" value="P-loop containing nucleoside triphosphate hydrolases"/>
    <property type="match status" value="1"/>
</dbReference>
<sequence length="388" mass="44636">MMLLKKGRLLMFLGSQVIVVALFIHMSVHRHLSQREESRRPVHVLVLSSWRSGSSFVGQLFGQHPDVFYLMEPAWHVWMTFTSSTAWKLHMAVRDLLRSVFLCDMSVFDAYMNPGPRKQSSLFQWEQSRALCSAPVCDFFPAHEISSPKHCKLLCGQQPFDMVEKACRSHGFVVLKEVRFLSLQALYPLLTDPSLNLHVVHLVRDPRAVFRSREHTTIELVVDSHIVLGQHLETIKEEDQPYYAMKIICKSQVDIVKAIQTLPEALQQRYLFLRYEDLVRAPLAQTTRLYKFVGLDFLPHLQTWVHNVTRGKGMGQHAFHTNARNALNVSQAWRWSLPYEKVSQLQDACGEAMDLLGYLQVRSQQEQGNLSLDLLSSSHILGQVFREG</sequence>